<feature type="chain" id="PRO_0000138357" description="UvrABC system protein C">
    <location>
        <begin position="1"/>
        <end position="584"/>
    </location>
</feature>
<feature type="domain" description="GIY-YIG" evidence="1">
    <location>
        <begin position="14"/>
        <end position="91"/>
    </location>
</feature>
<accession>Q9PQA9</accession>
<evidence type="ECO:0000255" key="1">
    <source>
        <dbReference type="HAMAP-Rule" id="MF_00203"/>
    </source>
</evidence>
<sequence length="584" mass="68026">MNDLLKNKLKLIPHKPGCYLWKDQFNQIIYIGKAKDLYNRTHSYFNGCKDNKTSKLVNNINDLEYIVVNNVNEALILENNLIKTHLPKYNILLKDGSNYPYIMITNEQYPRLKYVRTYDKNKGIYFGPLADSTNKYQLFNLLNSIFPFNKCNHQPYKKCIYYDLHQCINQVQQSTYQEAISEVKEIFKGNLDHILMILQTKEQHAVTKLDFENAQKYAEQQKALTSIINSGLVQLDNNESFDIIGFYEKNNYLVIIIFNYVKGKLLNKSADTFAIYDYEINELITSFLMQYYSQNKISSKIIVSLDDDNLLALSQRFHTKFINAQTKFHKRILKLALDNAILYFESNIKNVINKQNELDDALNQLKQILKLPDLNIIECFDNSNINLSLPIAGMIVYQNGKLNNKLNRKYNLMTTKNASDYHFMIEVITRRYQRLVSQHQKLPNLIVVDGGKLQVNAALYALAQLQINIPLIGLKKDQKHKTDAIVLTNGDEIVLDRKSILYKFLANMQNDVHNYAISFLRDKHTKSIFNSLLDNVQGLGKKRFNELLKYYDSINDLKSASDQELLQFLPKNVLVNLREKLNKI</sequence>
<proteinExistence type="inferred from homology"/>
<protein>
    <recommendedName>
        <fullName evidence="1">UvrABC system protein C</fullName>
        <shortName evidence="1">Protein UvrC</shortName>
    </recommendedName>
    <alternativeName>
        <fullName evidence="1">Excinuclease ABC subunit C</fullName>
    </alternativeName>
</protein>
<comment type="function">
    <text evidence="1">The UvrABC repair system catalyzes the recognition and processing of DNA lesions. UvrC both incises the 5' and 3' sides of the lesion. The N-terminal half is responsible for the 3' incision and the C-terminal half is responsible for the 5' incision.</text>
</comment>
<comment type="subunit">
    <text evidence="1">Interacts with UvrB in an incision complex.</text>
</comment>
<comment type="subcellular location">
    <subcellularLocation>
        <location evidence="1">Cytoplasm</location>
    </subcellularLocation>
</comment>
<comment type="similarity">
    <text evidence="1">Belongs to the UvrC family.</text>
</comment>
<dbReference type="EMBL" id="AF222894">
    <property type="protein sequence ID" value="AAF30791.1"/>
    <property type="molecule type" value="Genomic_DNA"/>
</dbReference>
<dbReference type="RefSeq" id="WP_010891756.1">
    <property type="nucleotide sequence ID" value="NC_002162.1"/>
</dbReference>
<dbReference type="SMR" id="Q9PQA9"/>
<dbReference type="STRING" id="273119.UU381"/>
<dbReference type="EnsemblBacteria" id="AAF30791">
    <property type="protein sequence ID" value="AAF30791"/>
    <property type="gene ID" value="UU381"/>
</dbReference>
<dbReference type="GeneID" id="29672651"/>
<dbReference type="KEGG" id="uur:UU381"/>
<dbReference type="PATRIC" id="fig|273119.6.peg.396"/>
<dbReference type="eggNOG" id="COG0322">
    <property type="taxonomic scope" value="Bacteria"/>
</dbReference>
<dbReference type="HOGENOM" id="CLU_014841_3_2_14"/>
<dbReference type="OrthoDB" id="9804933at2"/>
<dbReference type="Proteomes" id="UP000000423">
    <property type="component" value="Chromosome"/>
</dbReference>
<dbReference type="GO" id="GO:0005737">
    <property type="term" value="C:cytoplasm"/>
    <property type="evidence" value="ECO:0007669"/>
    <property type="project" value="UniProtKB-SubCell"/>
</dbReference>
<dbReference type="GO" id="GO:0009380">
    <property type="term" value="C:excinuclease repair complex"/>
    <property type="evidence" value="ECO:0007669"/>
    <property type="project" value="InterPro"/>
</dbReference>
<dbReference type="GO" id="GO:0003677">
    <property type="term" value="F:DNA binding"/>
    <property type="evidence" value="ECO:0007669"/>
    <property type="project" value="UniProtKB-UniRule"/>
</dbReference>
<dbReference type="GO" id="GO:0009381">
    <property type="term" value="F:excinuclease ABC activity"/>
    <property type="evidence" value="ECO:0007669"/>
    <property type="project" value="UniProtKB-UniRule"/>
</dbReference>
<dbReference type="GO" id="GO:0006289">
    <property type="term" value="P:nucleotide-excision repair"/>
    <property type="evidence" value="ECO:0007669"/>
    <property type="project" value="UniProtKB-UniRule"/>
</dbReference>
<dbReference type="GO" id="GO:0009432">
    <property type="term" value="P:SOS response"/>
    <property type="evidence" value="ECO:0007669"/>
    <property type="project" value="UniProtKB-UniRule"/>
</dbReference>
<dbReference type="CDD" id="cd10434">
    <property type="entry name" value="GIY-YIG_UvrC_Cho"/>
    <property type="match status" value="1"/>
</dbReference>
<dbReference type="FunFam" id="3.40.1440.10:FF:000001">
    <property type="entry name" value="UvrABC system protein C"/>
    <property type="match status" value="1"/>
</dbReference>
<dbReference type="Gene3D" id="1.10.150.20">
    <property type="entry name" value="5' to 3' exonuclease, C-terminal subdomain"/>
    <property type="match status" value="1"/>
</dbReference>
<dbReference type="Gene3D" id="3.40.1440.10">
    <property type="entry name" value="GIY-YIG endonuclease"/>
    <property type="match status" value="1"/>
</dbReference>
<dbReference type="Gene3D" id="3.30.420.340">
    <property type="entry name" value="UvrC, RNAse H endonuclease domain"/>
    <property type="match status" value="1"/>
</dbReference>
<dbReference type="HAMAP" id="MF_00203">
    <property type="entry name" value="UvrC"/>
    <property type="match status" value="1"/>
</dbReference>
<dbReference type="InterPro" id="IPR013320">
    <property type="entry name" value="ConA-like_dom_sf"/>
</dbReference>
<dbReference type="InterPro" id="IPR000305">
    <property type="entry name" value="GIY-YIG_endonuc"/>
</dbReference>
<dbReference type="InterPro" id="IPR035901">
    <property type="entry name" value="GIY-YIG_endonuc_sf"/>
</dbReference>
<dbReference type="InterPro" id="IPR047296">
    <property type="entry name" value="GIY-YIG_UvrC_Cho"/>
</dbReference>
<dbReference type="InterPro" id="IPR010994">
    <property type="entry name" value="RuvA_2-like"/>
</dbReference>
<dbReference type="InterPro" id="IPR050066">
    <property type="entry name" value="UvrABC_protein_C"/>
</dbReference>
<dbReference type="InterPro" id="IPR004791">
    <property type="entry name" value="UvrC"/>
</dbReference>
<dbReference type="InterPro" id="IPR001162">
    <property type="entry name" value="UvrC_RNase_H_dom"/>
</dbReference>
<dbReference type="InterPro" id="IPR038476">
    <property type="entry name" value="UvrC_RNase_H_dom_sf"/>
</dbReference>
<dbReference type="NCBIfam" id="TIGR00194">
    <property type="entry name" value="uvrC"/>
    <property type="match status" value="1"/>
</dbReference>
<dbReference type="PANTHER" id="PTHR30562:SF1">
    <property type="entry name" value="UVRABC SYSTEM PROTEIN C"/>
    <property type="match status" value="1"/>
</dbReference>
<dbReference type="PANTHER" id="PTHR30562">
    <property type="entry name" value="UVRC/OXIDOREDUCTASE"/>
    <property type="match status" value="1"/>
</dbReference>
<dbReference type="Pfam" id="PF01541">
    <property type="entry name" value="GIY-YIG"/>
    <property type="match status" value="1"/>
</dbReference>
<dbReference type="Pfam" id="PF22920">
    <property type="entry name" value="UvrC_RNaseH"/>
    <property type="match status" value="1"/>
</dbReference>
<dbReference type="Pfam" id="PF08459">
    <property type="entry name" value="UvrC_RNaseH_dom"/>
    <property type="match status" value="1"/>
</dbReference>
<dbReference type="SMART" id="SM00465">
    <property type="entry name" value="GIYc"/>
    <property type="match status" value="1"/>
</dbReference>
<dbReference type="SUPFAM" id="SSF49899">
    <property type="entry name" value="Concanavalin A-like lectins/glucanases"/>
    <property type="match status" value="1"/>
</dbReference>
<dbReference type="SUPFAM" id="SSF82771">
    <property type="entry name" value="GIY-YIG endonuclease"/>
    <property type="match status" value="1"/>
</dbReference>
<dbReference type="SUPFAM" id="SSF47781">
    <property type="entry name" value="RuvA domain 2-like"/>
    <property type="match status" value="1"/>
</dbReference>
<dbReference type="PROSITE" id="PS50164">
    <property type="entry name" value="GIY_YIG"/>
    <property type="match status" value="1"/>
</dbReference>
<dbReference type="PROSITE" id="PS50165">
    <property type="entry name" value="UVRC"/>
    <property type="match status" value="1"/>
</dbReference>
<reference key="1">
    <citation type="journal article" date="2000" name="Nature">
        <title>The complete sequence of the mucosal pathogen Ureaplasma urealyticum.</title>
        <authorList>
            <person name="Glass J.I."/>
            <person name="Lefkowitz E.J."/>
            <person name="Glass J.S."/>
            <person name="Heiner C.R."/>
            <person name="Chen E.Y."/>
            <person name="Cassell G.H."/>
        </authorList>
    </citation>
    <scope>NUCLEOTIDE SEQUENCE [LARGE SCALE GENOMIC DNA]</scope>
    <source>
        <strain>ATCC 700970</strain>
    </source>
</reference>
<gene>
    <name evidence="1" type="primary">uvrC</name>
    <name type="ordered locus">UU381</name>
</gene>
<organism>
    <name type="scientific">Ureaplasma parvum serovar 3 (strain ATCC 700970)</name>
    <dbReference type="NCBI Taxonomy" id="273119"/>
    <lineage>
        <taxon>Bacteria</taxon>
        <taxon>Bacillati</taxon>
        <taxon>Mycoplasmatota</taxon>
        <taxon>Mycoplasmoidales</taxon>
        <taxon>Mycoplasmoidaceae</taxon>
        <taxon>Ureaplasma</taxon>
    </lineage>
</organism>
<keyword id="KW-0963">Cytoplasm</keyword>
<keyword id="KW-0227">DNA damage</keyword>
<keyword id="KW-0228">DNA excision</keyword>
<keyword id="KW-0234">DNA repair</keyword>
<keyword id="KW-0267">Excision nuclease</keyword>
<keyword id="KW-1185">Reference proteome</keyword>
<keyword id="KW-0742">SOS response</keyword>
<name>UVRC_UREPA</name>